<protein>
    <recommendedName>
        <fullName evidence="1">Phosphoglycerate kinase</fullName>
        <ecNumber evidence="1">2.7.2.3</ecNumber>
    </recommendedName>
</protein>
<proteinExistence type="inferred from homology"/>
<evidence type="ECO:0000255" key="1">
    <source>
        <dbReference type="HAMAP-Rule" id="MF_00145"/>
    </source>
</evidence>
<reference key="1">
    <citation type="journal article" date="2011" name="Appl. Environ. Microbiol.">
        <title>Genomic potential of Marinobacter aquaeolei, a biogeochemical 'opportunitroph'.</title>
        <authorList>
            <person name="Singer E."/>
            <person name="Webb E.A."/>
            <person name="Nelson W.C."/>
            <person name="Heidelberg J.F."/>
            <person name="Ivanova N."/>
            <person name="Pati A."/>
            <person name="Edwards K.J."/>
        </authorList>
    </citation>
    <scope>NUCLEOTIDE SEQUENCE [LARGE SCALE GENOMIC DNA]</scope>
    <source>
        <strain>ATCC 700491 / DSM 11845 / VT8</strain>
    </source>
</reference>
<organism>
    <name type="scientific">Marinobacter nauticus (strain ATCC 700491 / DSM 11845 / VT8)</name>
    <name type="common">Marinobacter aquaeolei</name>
    <dbReference type="NCBI Taxonomy" id="351348"/>
    <lineage>
        <taxon>Bacteria</taxon>
        <taxon>Pseudomonadati</taxon>
        <taxon>Pseudomonadota</taxon>
        <taxon>Gammaproteobacteria</taxon>
        <taxon>Pseudomonadales</taxon>
        <taxon>Marinobacteraceae</taxon>
        <taxon>Marinobacter</taxon>
    </lineage>
</organism>
<sequence>MAIKKMTDLNLAGKRVLIREDLNVPVKDGKVSSDARIRASLPTIKAAKDAGAKVMLMSHLGRPEEGVYDEASSMKPVAEHLGTLLGQEVRLIKDYLDGVEVADGEVVLFENVRFNKGEKKDNEELARQYAALCDIYVMDAFGTAHRAQASTHGVARFAPEACAGPLLAAELEALGKALDNPAKPVVAIVGGSKVSTKLDVLNALEKVCDQIIVGGGIANTFLAAAGHPVGKSLCEHDLIDTAKDIASRVEIPLPVDVVVASEFAETATATTKNISDVSDDDMILDVGPETAGQFAELLKNAKTILWNGPVGVFEFDQFGNGTKALAQAIAESDAFSLAGGGDTVAAVDKYGVADKISYISTGGGAFLEFVEGKTLPAVAVLEERGD</sequence>
<keyword id="KW-0067">ATP-binding</keyword>
<keyword id="KW-0963">Cytoplasm</keyword>
<keyword id="KW-0324">Glycolysis</keyword>
<keyword id="KW-0418">Kinase</keyword>
<keyword id="KW-0547">Nucleotide-binding</keyword>
<keyword id="KW-0808">Transferase</keyword>
<accession>A1U543</accession>
<comment type="catalytic activity">
    <reaction evidence="1">
        <text>(2R)-3-phosphoglycerate + ATP = (2R)-3-phospho-glyceroyl phosphate + ADP</text>
        <dbReference type="Rhea" id="RHEA:14801"/>
        <dbReference type="ChEBI" id="CHEBI:30616"/>
        <dbReference type="ChEBI" id="CHEBI:57604"/>
        <dbReference type="ChEBI" id="CHEBI:58272"/>
        <dbReference type="ChEBI" id="CHEBI:456216"/>
        <dbReference type="EC" id="2.7.2.3"/>
    </reaction>
</comment>
<comment type="pathway">
    <text evidence="1">Carbohydrate degradation; glycolysis; pyruvate from D-glyceraldehyde 3-phosphate: step 2/5.</text>
</comment>
<comment type="subunit">
    <text evidence="1">Monomer.</text>
</comment>
<comment type="subcellular location">
    <subcellularLocation>
        <location evidence="1">Cytoplasm</location>
    </subcellularLocation>
</comment>
<comment type="similarity">
    <text evidence="1">Belongs to the phosphoglycerate kinase family.</text>
</comment>
<feature type="chain" id="PRO_1000058012" description="Phosphoglycerate kinase">
    <location>
        <begin position="1"/>
        <end position="386"/>
    </location>
</feature>
<feature type="binding site" evidence="1">
    <location>
        <begin position="21"/>
        <end position="23"/>
    </location>
    <ligand>
        <name>substrate</name>
    </ligand>
</feature>
<feature type="binding site" evidence="1">
    <location>
        <position position="36"/>
    </location>
    <ligand>
        <name>substrate</name>
    </ligand>
</feature>
<feature type="binding site" evidence="1">
    <location>
        <begin position="59"/>
        <end position="62"/>
    </location>
    <ligand>
        <name>substrate</name>
    </ligand>
</feature>
<feature type="binding site" evidence="1">
    <location>
        <position position="113"/>
    </location>
    <ligand>
        <name>substrate</name>
    </ligand>
</feature>
<feature type="binding site" evidence="1">
    <location>
        <position position="146"/>
    </location>
    <ligand>
        <name>substrate</name>
    </ligand>
</feature>
<feature type="binding site" evidence="1">
    <location>
        <position position="197"/>
    </location>
    <ligand>
        <name>ATP</name>
        <dbReference type="ChEBI" id="CHEBI:30616"/>
    </ligand>
</feature>
<feature type="binding site" evidence="1">
    <location>
        <position position="314"/>
    </location>
    <ligand>
        <name>ATP</name>
        <dbReference type="ChEBI" id="CHEBI:30616"/>
    </ligand>
</feature>
<feature type="binding site" evidence="1">
    <location>
        <begin position="340"/>
        <end position="343"/>
    </location>
    <ligand>
        <name>ATP</name>
        <dbReference type="ChEBI" id="CHEBI:30616"/>
    </ligand>
</feature>
<gene>
    <name evidence="1" type="primary">pgk</name>
    <name type="ordered locus">Maqu_3038</name>
</gene>
<name>PGK_MARN8</name>
<dbReference type="EC" id="2.7.2.3" evidence="1"/>
<dbReference type="EMBL" id="CP000514">
    <property type="protein sequence ID" value="ABM20112.1"/>
    <property type="molecule type" value="Genomic_DNA"/>
</dbReference>
<dbReference type="RefSeq" id="WP_011786480.1">
    <property type="nucleotide sequence ID" value="NC_008740.1"/>
</dbReference>
<dbReference type="SMR" id="A1U543"/>
<dbReference type="STRING" id="351348.Maqu_3038"/>
<dbReference type="KEGG" id="maq:Maqu_3038"/>
<dbReference type="eggNOG" id="COG0126">
    <property type="taxonomic scope" value="Bacteria"/>
</dbReference>
<dbReference type="HOGENOM" id="CLU_025427_0_2_6"/>
<dbReference type="OrthoDB" id="9808460at2"/>
<dbReference type="UniPathway" id="UPA00109">
    <property type="reaction ID" value="UER00185"/>
</dbReference>
<dbReference type="Proteomes" id="UP000000998">
    <property type="component" value="Chromosome"/>
</dbReference>
<dbReference type="GO" id="GO:0005829">
    <property type="term" value="C:cytosol"/>
    <property type="evidence" value="ECO:0007669"/>
    <property type="project" value="TreeGrafter"/>
</dbReference>
<dbReference type="GO" id="GO:0043531">
    <property type="term" value="F:ADP binding"/>
    <property type="evidence" value="ECO:0007669"/>
    <property type="project" value="TreeGrafter"/>
</dbReference>
<dbReference type="GO" id="GO:0005524">
    <property type="term" value="F:ATP binding"/>
    <property type="evidence" value="ECO:0007669"/>
    <property type="project" value="UniProtKB-KW"/>
</dbReference>
<dbReference type="GO" id="GO:0004618">
    <property type="term" value="F:phosphoglycerate kinase activity"/>
    <property type="evidence" value="ECO:0007669"/>
    <property type="project" value="UniProtKB-UniRule"/>
</dbReference>
<dbReference type="GO" id="GO:0006094">
    <property type="term" value="P:gluconeogenesis"/>
    <property type="evidence" value="ECO:0007669"/>
    <property type="project" value="TreeGrafter"/>
</dbReference>
<dbReference type="GO" id="GO:0006096">
    <property type="term" value="P:glycolytic process"/>
    <property type="evidence" value="ECO:0007669"/>
    <property type="project" value="UniProtKB-UniRule"/>
</dbReference>
<dbReference type="FunFam" id="3.40.50.1260:FF:000001">
    <property type="entry name" value="Phosphoglycerate kinase"/>
    <property type="match status" value="1"/>
</dbReference>
<dbReference type="FunFam" id="3.40.50.1260:FF:000002">
    <property type="entry name" value="Phosphoglycerate kinase"/>
    <property type="match status" value="1"/>
</dbReference>
<dbReference type="Gene3D" id="3.40.50.1260">
    <property type="entry name" value="Phosphoglycerate kinase, N-terminal domain"/>
    <property type="match status" value="2"/>
</dbReference>
<dbReference type="HAMAP" id="MF_00145">
    <property type="entry name" value="Phosphoglyc_kinase"/>
    <property type="match status" value="1"/>
</dbReference>
<dbReference type="InterPro" id="IPR001576">
    <property type="entry name" value="Phosphoglycerate_kinase"/>
</dbReference>
<dbReference type="InterPro" id="IPR015911">
    <property type="entry name" value="Phosphoglycerate_kinase_CS"/>
</dbReference>
<dbReference type="InterPro" id="IPR015824">
    <property type="entry name" value="Phosphoglycerate_kinase_N"/>
</dbReference>
<dbReference type="InterPro" id="IPR036043">
    <property type="entry name" value="Phosphoglycerate_kinase_sf"/>
</dbReference>
<dbReference type="PANTHER" id="PTHR11406">
    <property type="entry name" value="PHOSPHOGLYCERATE KINASE"/>
    <property type="match status" value="1"/>
</dbReference>
<dbReference type="PANTHER" id="PTHR11406:SF23">
    <property type="entry name" value="PHOSPHOGLYCERATE KINASE 1, CHLOROPLASTIC-RELATED"/>
    <property type="match status" value="1"/>
</dbReference>
<dbReference type="Pfam" id="PF00162">
    <property type="entry name" value="PGK"/>
    <property type="match status" value="1"/>
</dbReference>
<dbReference type="PIRSF" id="PIRSF000724">
    <property type="entry name" value="Pgk"/>
    <property type="match status" value="1"/>
</dbReference>
<dbReference type="PRINTS" id="PR00477">
    <property type="entry name" value="PHGLYCKINASE"/>
</dbReference>
<dbReference type="SUPFAM" id="SSF53748">
    <property type="entry name" value="Phosphoglycerate kinase"/>
    <property type="match status" value="1"/>
</dbReference>
<dbReference type="PROSITE" id="PS00111">
    <property type="entry name" value="PGLYCERATE_KINASE"/>
    <property type="match status" value="1"/>
</dbReference>